<protein>
    <recommendedName>
        <fullName evidence="1">UPF0178 protein Hhal_1913</fullName>
    </recommendedName>
</protein>
<proteinExistence type="inferred from homology"/>
<name>Y1913_HALHL</name>
<reference key="1">
    <citation type="submission" date="2006-12" db="EMBL/GenBank/DDBJ databases">
        <title>Complete sequence of Halorhodospira halophila SL1.</title>
        <authorList>
            <consortium name="US DOE Joint Genome Institute"/>
            <person name="Copeland A."/>
            <person name="Lucas S."/>
            <person name="Lapidus A."/>
            <person name="Barry K."/>
            <person name="Detter J.C."/>
            <person name="Glavina del Rio T."/>
            <person name="Hammon N."/>
            <person name="Israni S."/>
            <person name="Dalin E."/>
            <person name="Tice H."/>
            <person name="Pitluck S."/>
            <person name="Saunders E."/>
            <person name="Brettin T."/>
            <person name="Bruce D."/>
            <person name="Han C."/>
            <person name="Tapia R."/>
            <person name="Schmutz J."/>
            <person name="Larimer F."/>
            <person name="Land M."/>
            <person name="Hauser L."/>
            <person name="Kyrpides N."/>
            <person name="Mikhailova N."/>
            <person name="Hoff W."/>
            <person name="Richardson P."/>
        </authorList>
    </citation>
    <scope>NUCLEOTIDE SEQUENCE [LARGE SCALE GENOMIC DNA]</scope>
    <source>
        <strain>DSM 244 / SL1</strain>
    </source>
</reference>
<keyword id="KW-1185">Reference proteome</keyword>
<organism>
    <name type="scientific">Halorhodospira halophila (strain DSM 244 / SL1)</name>
    <name type="common">Ectothiorhodospira halophila (strain DSM 244 / SL1)</name>
    <dbReference type="NCBI Taxonomy" id="349124"/>
    <lineage>
        <taxon>Bacteria</taxon>
        <taxon>Pseudomonadati</taxon>
        <taxon>Pseudomonadota</taxon>
        <taxon>Gammaproteobacteria</taxon>
        <taxon>Chromatiales</taxon>
        <taxon>Ectothiorhodospiraceae</taxon>
        <taxon>Halorhodospira</taxon>
    </lineage>
</organism>
<comment type="similarity">
    <text evidence="1">Belongs to the UPF0178 family.</text>
</comment>
<accession>A1WYB5</accession>
<gene>
    <name type="ordered locus">Hhal_1913</name>
</gene>
<evidence type="ECO:0000255" key="1">
    <source>
        <dbReference type="HAMAP-Rule" id="MF_00489"/>
    </source>
</evidence>
<sequence>MRIWVDADACPGAIKEILFRAAQRTGVELTLVANHPIRVPPSPVIRSVQVAAGFDVADHEIVRRVAAGDLVITGDIPLAAEVIEAGAQALNPRGERYTPETIRERLNMRDFMDTLRASGVDTGGSAALSQRDRQAFANELDRILARRPSQG</sequence>
<dbReference type="EMBL" id="CP000544">
    <property type="protein sequence ID" value="ABM62677.1"/>
    <property type="molecule type" value="Genomic_DNA"/>
</dbReference>
<dbReference type="RefSeq" id="WP_011814699.1">
    <property type="nucleotide sequence ID" value="NC_008789.1"/>
</dbReference>
<dbReference type="STRING" id="349124.Hhal_1913"/>
<dbReference type="KEGG" id="hha:Hhal_1913"/>
<dbReference type="eggNOG" id="COG1671">
    <property type="taxonomic scope" value="Bacteria"/>
</dbReference>
<dbReference type="HOGENOM" id="CLU_106619_2_1_6"/>
<dbReference type="OrthoDB" id="9798918at2"/>
<dbReference type="Proteomes" id="UP000000647">
    <property type="component" value="Chromosome"/>
</dbReference>
<dbReference type="CDD" id="cd18720">
    <property type="entry name" value="PIN_YqxD-like"/>
    <property type="match status" value="1"/>
</dbReference>
<dbReference type="HAMAP" id="MF_00489">
    <property type="entry name" value="UPF0178"/>
    <property type="match status" value="1"/>
</dbReference>
<dbReference type="InterPro" id="IPR003791">
    <property type="entry name" value="UPF0178"/>
</dbReference>
<dbReference type="NCBIfam" id="NF001095">
    <property type="entry name" value="PRK00124.1"/>
    <property type="match status" value="1"/>
</dbReference>
<dbReference type="PANTHER" id="PTHR35146">
    <property type="entry name" value="UPF0178 PROTEIN YAII"/>
    <property type="match status" value="1"/>
</dbReference>
<dbReference type="PANTHER" id="PTHR35146:SF1">
    <property type="entry name" value="UPF0178 PROTEIN YAII"/>
    <property type="match status" value="1"/>
</dbReference>
<dbReference type="Pfam" id="PF02639">
    <property type="entry name" value="DUF188"/>
    <property type="match status" value="1"/>
</dbReference>
<feature type="chain" id="PRO_1000014422" description="UPF0178 protein Hhal_1913">
    <location>
        <begin position="1"/>
        <end position="151"/>
    </location>
</feature>